<organism>
    <name type="scientific">Agrobacterium tumefaciens (strain 15955)</name>
    <dbReference type="NCBI Taxonomy" id="190386"/>
    <lineage>
        <taxon>Bacteria</taxon>
        <taxon>Pseudomonadati</taxon>
        <taxon>Pseudomonadota</taxon>
        <taxon>Alphaproteobacteria</taxon>
        <taxon>Hyphomicrobiales</taxon>
        <taxon>Rhizobiaceae</taxon>
        <taxon>Rhizobium/Agrobacterium group</taxon>
        <taxon>Agrobacterium</taxon>
        <taxon>Agrobacterium tumefaciens complex</taxon>
    </lineage>
</organism>
<sequence>MNNDSQQAAHEVDASGSLVSDKHRRRLSGSQKLIVGGVVLALSLSLIWLGGRQKKVNDNASPSTLIAANTKPFHPAPIEVPPDTPAVQEAVQPTVPQPPRGEPERHEPRPEETPIFAYSSGDQGVSKRASQGDMGRRQEDKRDDNSLPNGEVSGENDLSIRMKPTELQPSRATLLPHPDFMVTQGTIIPCILQTAIDTNLAGYVKCVLPQDIRGTTNNIVLLDRGTTVVGEIQRGLQQGDERVFVLWDRAETPDHAMISLTSPSADELGRPGLPGSVDSHFWQRFSGAMLLSAVQGAFQAASTYAGSSGGGMSFNSFQNNGEQTTETALKATINIPPTLKKNQGDTVSIFVARDLDFFGVYQLRLTGGAARGRNRRS</sequence>
<name>VIRBA_AGRT9</name>
<keyword id="KW-0997">Cell inner membrane</keyword>
<keyword id="KW-1003">Cell membrane</keyword>
<keyword id="KW-0192">Crown gall tumor</keyword>
<keyword id="KW-0472">Membrane</keyword>
<keyword id="KW-0614">Plasmid</keyword>
<keyword id="KW-0812">Transmembrane</keyword>
<keyword id="KW-1133">Transmembrane helix</keyword>
<proteinExistence type="inferred from homology"/>
<accession>P05359</accession>
<evidence type="ECO:0000255" key="1"/>
<evidence type="ECO:0000256" key="2">
    <source>
        <dbReference type="SAM" id="MobiDB-lite"/>
    </source>
</evidence>
<evidence type="ECO:0000305" key="3"/>
<gene>
    <name type="primary">virB10</name>
</gene>
<reference key="1">
    <citation type="journal article" date="1988" name="Nucleic Acids Res.">
        <title>Analysis of the complete nucleotide sequence of the Agrobacterium tumefaciens virB operon.</title>
        <authorList>
            <person name="Thompson D.V."/>
            <person name="Melchers L.S."/>
            <person name="Idler K.B."/>
            <person name="Shilperoort R.A."/>
            <person name="Hooykaas P.J.J."/>
        </authorList>
    </citation>
    <scope>NUCLEOTIDE SEQUENCE [GENOMIC DNA]</scope>
</reference>
<protein>
    <recommendedName>
        <fullName>Protein virB10</fullName>
    </recommendedName>
</protein>
<dbReference type="EMBL" id="X06826">
    <property type="protein sequence ID" value="CAA29981.1"/>
    <property type="molecule type" value="Genomic_DNA"/>
</dbReference>
<dbReference type="PIR" id="S00786">
    <property type="entry name" value="B0AG55"/>
</dbReference>
<dbReference type="RefSeq" id="NP_059808.1">
    <property type="nucleotide sequence ID" value="NC_002377.1"/>
</dbReference>
<dbReference type="SMR" id="P05359"/>
<dbReference type="TCDB" id="3.A.7.1.1">
    <property type="family name" value="the type iv (conjugal dna-protein transfer or virb) secretory pathway (ivsp) family"/>
</dbReference>
<dbReference type="GO" id="GO:0005886">
    <property type="term" value="C:plasma membrane"/>
    <property type="evidence" value="ECO:0007669"/>
    <property type="project" value="UniProtKB-SubCell"/>
</dbReference>
<dbReference type="CDD" id="cd16429">
    <property type="entry name" value="VirB10"/>
    <property type="match status" value="1"/>
</dbReference>
<dbReference type="Gene3D" id="2.40.128.260">
    <property type="entry name" value="Type IV secretion system, VirB10/TraB/TrbI"/>
    <property type="match status" value="1"/>
</dbReference>
<dbReference type="InterPro" id="IPR047695">
    <property type="entry name" value="T4SS_VirB10/PtlG"/>
</dbReference>
<dbReference type="InterPro" id="IPR005498">
    <property type="entry name" value="T4SS_VirB10/TraB/TrbI"/>
</dbReference>
<dbReference type="InterPro" id="IPR042217">
    <property type="entry name" value="T4SS_VirB10/TrbI"/>
</dbReference>
<dbReference type="NCBIfam" id="NF010429">
    <property type="entry name" value="PRK13855.1"/>
    <property type="match status" value="1"/>
</dbReference>
<dbReference type="NCBIfam" id="NF038091">
    <property type="entry name" value="T4SS_VirB10"/>
    <property type="match status" value="1"/>
</dbReference>
<dbReference type="Pfam" id="PF03743">
    <property type="entry name" value="TrbI"/>
    <property type="match status" value="1"/>
</dbReference>
<comment type="function">
    <text>VirB proteins are suggested to act at the bacterial surface and there play an important role in directing T-DNA transfer to plant cells.</text>
</comment>
<comment type="subcellular location">
    <subcellularLocation>
        <location evidence="3">Cell inner membrane</location>
        <topology evidence="3">Single-pass membrane protein</topology>
    </subcellularLocation>
</comment>
<comment type="similarity">
    <text evidence="3">Belongs to the TrbI/VirB10 family.</text>
</comment>
<geneLocation type="plasmid">
    <name>pTi15955</name>
</geneLocation>
<feature type="chain" id="PRO_0000065847" description="Protein virB10">
    <location>
        <begin position="1"/>
        <end position="377"/>
    </location>
</feature>
<feature type="transmembrane region" description="Helical" evidence="1">
    <location>
        <begin position="33"/>
        <end position="50"/>
    </location>
</feature>
<feature type="region of interest" description="Disordered" evidence="2">
    <location>
        <begin position="92"/>
        <end position="161"/>
    </location>
</feature>
<feature type="compositionally biased region" description="Basic and acidic residues" evidence="2">
    <location>
        <begin position="101"/>
        <end position="112"/>
    </location>
</feature>
<feature type="compositionally biased region" description="Basic and acidic residues" evidence="2">
    <location>
        <begin position="134"/>
        <end position="145"/>
    </location>
</feature>